<gene>
    <name type="primary">exbD</name>
    <name type="ordered locus">HD_0328</name>
</gene>
<dbReference type="EMBL" id="AF001034">
    <property type="protein sequence ID" value="AAC01946.1"/>
    <property type="molecule type" value="Genomic_DNA"/>
</dbReference>
<dbReference type="EMBL" id="AE017143">
    <property type="protein sequence ID" value="AAP95305.1"/>
    <property type="molecule type" value="Genomic_DNA"/>
</dbReference>
<dbReference type="RefSeq" id="WP_010944358.1">
    <property type="nucleotide sequence ID" value="NC_002940.2"/>
</dbReference>
<dbReference type="SMR" id="O51809"/>
<dbReference type="STRING" id="233412.HD_0328"/>
<dbReference type="KEGG" id="hdu:HD_0328"/>
<dbReference type="eggNOG" id="COG0848">
    <property type="taxonomic scope" value="Bacteria"/>
</dbReference>
<dbReference type="HOGENOM" id="CLU_085305_2_0_6"/>
<dbReference type="OrthoDB" id="9798629at2"/>
<dbReference type="Proteomes" id="UP000001022">
    <property type="component" value="Chromosome"/>
</dbReference>
<dbReference type="GO" id="GO:0005886">
    <property type="term" value="C:plasma membrane"/>
    <property type="evidence" value="ECO:0007669"/>
    <property type="project" value="UniProtKB-SubCell"/>
</dbReference>
<dbReference type="GO" id="GO:0022857">
    <property type="term" value="F:transmembrane transporter activity"/>
    <property type="evidence" value="ECO:0007669"/>
    <property type="project" value="InterPro"/>
</dbReference>
<dbReference type="GO" id="GO:0015031">
    <property type="term" value="P:protein transport"/>
    <property type="evidence" value="ECO:0007669"/>
    <property type="project" value="UniProtKB-KW"/>
</dbReference>
<dbReference type="Gene3D" id="3.30.420.270">
    <property type="match status" value="1"/>
</dbReference>
<dbReference type="InterPro" id="IPR003400">
    <property type="entry name" value="ExbD"/>
</dbReference>
<dbReference type="InterPro" id="IPR014171">
    <property type="entry name" value="TonB_ExbD_2"/>
</dbReference>
<dbReference type="NCBIfam" id="TIGR02804">
    <property type="entry name" value="ExbD_2"/>
    <property type="match status" value="1"/>
</dbReference>
<dbReference type="PANTHER" id="PTHR30558:SF12">
    <property type="entry name" value="BIOPOLYMER TRANSPORT PROTEIN EXBD"/>
    <property type="match status" value="1"/>
</dbReference>
<dbReference type="PANTHER" id="PTHR30558">
    <property type="entry name" value="EXBD MEMBRANE COMPONENT OF PMF-DRIVEN MACROMOLECULE IMPORT SYSTEM"/>
    <property type="match status" value="1"/>
</dbReference>
<dbReference type="Pfam" id="PF02472">
    <property type="entry name" value="ExbD"/>
    <property type="match status" value="1"/>
</dbReference>
<sequence length="129" mass="14397">MKKFDEINIIPFIDIMLVLLAIVLVTASFISQGKIQVNVPKATTTQAMKADELAKLLTITENNGFYFNDKLITKEDLSTEIASWDKTQKVTLKVDSAVAFEKFVELTDLLSANEIKNVAIVTKKDTSKK</sequence>
<proteinExistence type="inferred from homology"/>
<evidence type="ECO:0000250" key="1"/>
<evidence type="ECO:0000255" key="2"/>
<evidence type="ECO:0000305" key="3"/>
<keyword id="KW-0997">Cell inner membrane</keyword>
<keyword id="KW-1003">Cell membrane</keyword>
<keyword id="KW-0472">Membrane</keyword>
<keyword id="KW-0653">Protein transport</keyword>
<keyword id="KW-1185">Reference proteome</keyword>
<keyword id="KW-0812">Transmembrane</keyword>
<keyword id="KW-1133">Transmembrane helix</keyword>
<keyword id="KW-0813">Transport</keyword>
<comment type="function">
    <text evidence="1">Involved in the TonB-dependent energy-dependent transport of various receptor-bound substrates.</text>
</comment>
<comment type="subunit">
    <text evidence="1">The accessory proteins ExbB and ExbD seem to form a complex with TonB.</text>
</comment>
<comment type="subcellular location">
    <subcellularLocation>
        <location evidence="3">Cell inner membrane</location>
        <topology evidence="3">Single-pass type II membrane protein</topology>
    </subcellularLocation>
</comment>
<comment type="similarity">
    <text evidence="3">Belongs to the ExbD/TolR family.</text>
</comment>
<organism>
    <name type="scientific">Haemophilus ducreyi (strain 35000HP / ATCC 700724)</name>
    <dbReference type="NCBI Taxonomy" id="233412"/>
    <lineage>
        <taxon>Bacteria</taxon>
        <taxon>Pseudomonadati</taxon>
        <taxon>Pseudomonadota</taxon>
        <taxon>Gammaproteobacteria</taxon>
        <taxon>Pasteurellales</taxon>
        <taxon>Pasteurellaceae</taxon>
        <taxon>Haemophilus</taxon>
    </lineage>
</organism>
<accession>O51809</accession>
<feature type="chain" id="PRO_0000129121" description="Biopolymer transport protein ExbD">
    <location>
        <begin position="1"/>
        <end position="129"/>
    </location>
</feature>
<feature type="topological domain" description="Cytoplasmic" evidence="2">
    <location>
        <begin position="1"/>
        <end position="9"/>
    </location>
</feature>
<feature type="transmembrane region" description="Helical" evidence="2">
    <location>
        <begin position="10"/>
        <end position="30"/>
    </location>
</feature>
<feature type="topological domain" description="Periplasmic" evidence="2">
    <location>
        <begin position="31"/>
        <end position="129"/>
    </location>
</feature>
<protein>
    <recommendedName>
        <fullName>Biopolymer transport protein ExbD</fullName>
    </recommendedName>
</protein>
<reference key="1">
    <citation type="journal article" date="1998" name="Infect. Immun.">
        <title>Role of the Haemophilus ducreyi Ton system in internalization of heme from hemoglobin.</title>
        <authorList>
            <person name="Elkins C."/>
            <person name="Totten P.A."/>
            <person name="Olsen B."/>
            <person name="Thomas C.E."/>
        </authorList>
    </citation>
    <scope>NUCLEOTIDE SEQUENCE [GENOMIC DNA]</scope>
    <source>
        <strain>35000HP / ATCC 700724</strain>
    </source>
</reference>
<reference key="2">
    <citation type="submission" date="2003-06" db="EMBL/GenBank/DDBJ databases">
        <title>The complete genome sequence of Haemophilus ducreyi.</title>
        <authorList>
            <person name="Munson R.S. Jr."/>
            <person name="Ray W.C."/>
            <person name="Mahairas G."/>
            <person name="Sabo P."/>
            <person name="Mungur R."/>
            <person name="Johnson L."/>
            <person name="Nguyen D."/>
            <person name="Wang J."/>
            <person name="Forst C."/>
            <person name="Hood L."/>
        </authorList>
    </citation>
    <scope>NUCLEOTIDE SEQUENCE [LARGE SCALE GENOMIC DNA]</scope>
    <source>
        <strain>35000HP / ATCC 700724</strain>
    </source>
</reference>
<name>EXBD_HAEDU</name>